<comment type="function">
    <text evidence="1">Involved in mitochondrial genome encoded proteins translation. Involved in the binding of tRNA to the ribosomes (By similarity).</text>
</comment>
<comment type="subunit">
    <text evidence="1">Part of the mitochondrial small ribosomal subunit.</text>
</comment>
<comment type="subcellular location">
    <subcellularLocation>
        <location evidence="1">Mitochondrion</location>
    </subcellularLocation>
</comment>
<comment type="similarity">
    <text evidence="3">Belongs to the universal ribosomal protein uS10 family.</text>
</comment>
<reference key="1">
    <citation type="journal article" date="2004" name="Nature">
        <title>Genome evolution in yeasts.</title>
        <authorList>
            <person name="Dujon B."/>
            <person name="Sherman D."/>
            <person name="Fischer G."/>
            <person name="Durrens P."/>
            <person name="Casaregola S."/>
            <person name="Lafontaine I."/>
            <person name="de Montigny J."/>
            <person name="Marck C."/>
            <person name="Neuveglise C."/>
            <person name="Talla E."/>
            <person name="Goffard N."/>
            <person name="Frangeul L."/>
            <person name="Aigle M."/>
            <person name="Anthouard V."/>
            <person name="Babour A."/>
            <person name="Barbe V."/>
            <person name="Barnay S."/>
            <person name="Blanchin S."/>
            <person name="Beckerich J.-M."/>
            <person name="Beyne E."/>
            <person name="Bleykasten C."/>
            <person name="Boisrame A."/>
            <person name="Boyer J."/>
            <person name="Cattolico L."/>
            <person name="Confanioleri F."/>
            <person name="de Daruvar A."/>
            <person name="Despons L."/>
            <person name="Fabre E."/>
            <person name="Fairhead C."/>
            <person name="Ferry-Dumazet H."/>
            <person name="Groppi A."/>
            <person name="Hantraye F."/>
            <person name="Hennequin C."/>
            <person name="Jauniaux N."/>
            <person name="Joyet P."/>
            <person name="Kachouri R."/>
            <person name="Kerrest A."/>
            <person name="Koszul R."/>
            <person name="Lemaire M."/>
            <person name="Lesur I."/>
            <person name="Ma L."/>
            <person name="Muller H."/>
            <person name="Nicaud J.-M."/>
            <person name="Nikolski M."/>
            <person name="Oztas S."/>
            <person name="Ozier-Kalogeropoulos O."/>
            <person name="Pellenz S."/>
            <person name="Potier S."/>
            <person name="Richard G.-F."/>
            <person name="Straub M.-L."/>
            <person name="Suleau A."/>
            <person name="Swennen D."/>
            <person name="Tekaia F."/>
            <person name="Wesolowski-Louvel M."/>
            <person name="Westhof E."/>
            <person name="Wirth B."/>
            <person name="Zeniou-Meyer M."/>
            <person name="Zivanovic Y."/>
            <person name="Bolotin-Fukuhara M."/>
            <person name="Thierry A."/>
            <person name="Bouchier C."/>
            <person name="Caudron B."/>
            <person name="Scarpelli C."/>
            <person name="Gaillardin C."/>
            <person name="Weissenbach J."/>
            <person name="Wincker P."/>
            <person name="Souciet J.-L."/>
        </authorList>
    </citation>
    <scope>NUCLEOTIDE SEQUENCE [LARGE SCALE GENOMIC DNA]</scope>
    <source>
        <strain>ATCC 8585 / CBS 2359 / DSM 70799 / NBRC 1267 / NRRL Y-1140 / WM37</strain>
    </source>
</reference>
<accession>Q6CJI3</accession>
<organism>
    <name type="scientific">Kluyveromyces lactis (strain ATCC 8585 / CBS 2359 / DSM 70799 / NBRC 1267 / NRRL Y-1140 / WM37)</name>
    <name type="common">Yeast</name>
    <name type="synonym">Candida sphaerica</name>
    <dbReference type="NCBI Taxonomy" id="284590"/>
    <lineage>
        <taxon>Eukaryota</taxon>
        <taxon>Fungi</taxon>
        <taxon>Dikarya</taxon>
        <taxon>Ascomycota</taxon>
        <taxon>Saccharomycotina</taxon>
        <taxon>Saccharomycetes</taxon>
        <taxon>Saccharomycetales</taxon>
        <taxon>Saccharomycetaceae</taxon>
        <taxon>Kluyveromyces</taxon>
    </lineage>
</organism>
<keyword id="KW-0496">Mitochondrion</keyword>
<keyword id="KW-1185">Reference proteome</keyword>
<keyword id="KW-0687">Ribonucleoprotein</keyword>
<keyword id="KW-0689">Ribosomal protein</keyword>
<keyword id="KW-0809">Transit peptide</keyword>
<sequence length="207" mass="23786">MNMFRQAVRSFVRYQSTTSLNPKILPFNAKETPIPKCVEAVYHAPLKIEPTHRDLIADIQLRSYDNENLDFFSSFVLRAGYYLGIPMKGPKPLPTKRKRWTVIRAPFVMAKSKENFERHTHARLIRLYDCNTELVETLLSYISKHGISGVGIKCNLYQREPIDLDSKKDGPELENIDISSQLQGLDDVVGAKVVELLNNPEFKKHLQ</sequence>
<protein>
    <recommendedName>
        <fullName evidence="3">Small ribosomal subunit protein uS10m</fullName>
    </recommendedName>
    <alternativeName>
        <fullName>37S ribosomal protein S10, mitochondrial</fullName>
    </alternativeName>
    <alternativeName>
        <fullName>Mitochondrial ribosomal small subunit protein 10</fullName>
    </alternativeName>
</protein>
<gene>
    <name type="primary">RSM10</name>
    <name type="ordered locus">KLLA0F18436g</name>
</gene>
<proteinExistence type="inferred from homology"/>
<name>RT10_KLULA</name>
<feature type="transit peptide" description="Mitochondrion" evidence="2">
    <location>
        <begin position="1"/>
        <end position="14"/>
    </location>
</feature>
<feature type="chain" id="PRO_0000043264" description="Small ribosomal subunit protein uS10m">
    <location>
        <begin position="15"/>
        <end position="207"/>
    </location>
</feature>
<dbReference type="EMBL" id="CR382126">
    <property type="protein sequence ID" value="CAG98614.1"/>
    <property type="molecule type" value="Genomic_DNA"/>
</dbReference>
<dbReference type="RefSeq" id="XP_455906.1">
    <property type="nucleotide sequence ID" value="XM_455906.1"/>
</dbReference>
<dbReference type="SMR" id="Q6CJI3"/>
<dbReference type="FunCoup" id="Q6CJI3">
    <property type="interactions" value="307"/>
</dbReference>
<dbReference type="STRING" id="284590.Q6CJI3"/>
<dbReference type="PaxDb" id="284590-Q6CJI3"/>
<dbReference type="KEGG" id="kla:KLLA0_F18436g"/>
<dbReference type="eggNOG" id="KOG3321">
    <property type="taxonomic scope" value="Eukaryota"/>
</dbReference>
<dbReference type="HOGENOM" id="CLU_051208_4_0_1"/>
<dbReference type="InParanoid" id="Q6CJI3"/>
<dbReference type="OMA" id="KVESWTL"/>
<dbReference type="Proteomes" id="UP000000598">
    <property type="component" value="Chromosome F"/>
</dbReference>
<dbReference type="GO" id="GO:0005739">
    <property type="term" value="C:mitochondrion"/>
    <property type="evidence" value="ECO:0007669"/>
    <property type="project" value="UniProtKB-SubCell"/>
</dbReference>
<dbReference type="GO" id="GO:1990904">
    <property type="term" value="C:ribonucleoprotein complex"/>
    <property type="evidence" value="ECO:0007669"/>
    <property type="project" value="UniProtKB-KW"/>
</dbReference>
<dbReference type="GO" id="GO:0005840">
    <property type="term" value="C:ribosome"/>
    <property type="evidence" value="ECO:0007669"/>
    <property type="project" value="UniProtKB-KW"/>
</dbReference>
<dbReference type="GO" id="GO:0003735">
    <property type="term" value="F:structural constituent of ribosome"/>
    <property type="evidence" value="ECO:0007669"/>
    <property type="project" value="InterPro"/>
</dbReference>
<dbReference type="GO" id="GO:0006412">
    <property type="term" value="P:translation"/>
    <property type="evidence" value="ECO:0007669"/>
    <property type="project" value="InterPro"/>
</dbReference>
<dbReference type="FunFam" id="3.30.70.600:FF:000003">
    <property type="entry name" value="30S ribosomal protein S10"/>
    <property type="match status" value="1"/>
</dbReference>
<dbReference type="Gene3D" id="3.30.70.600">
    <property type="entry name" value="Ribosomal protein S10 domain"/>
    <property type="match status" value="1"/>
</dbReference>
<dbReference type="HAMAP" id="MF_00508">
    <property type="entry name" value="Ribosomal_uS10"/>
    <property type="match status" value="1"/>
</dbReference>
<dbReference type="InterPro" id="IPR001848">
    <property type="entry name" value="Ribosomal_uS10"/>
</dbReference>
<dbReference type="InterPro" id="IPR027486">
    <property type="entry name" value="Ribosomal_uS10_dom"/>
</dbReference>
<dbReference type="InterPro" id="IPR036838">
    <property type="entry name" value="Ribosomal_uS10_dom_sf"/>
</dbReference>
<dbReference type="NCBIfam" id="TIGR01049">
    <property type="entry name" value="rpsJ_bact"/>
    <property type="match status" value="1"/>
</dbReference>
<dbReference type="PANTHER" id="PTHR11700">
    <property type="entry name" value="30S RIBOSOMAL PROTEIN S10 FAMILY MEMBER"/>
    <property type="match status" value="1"/>
</dbReference>
<dbReference type="Pfam" id="PF00338">
    <property type="entry name" value="Ribosomal_S10"/>
    <property type="match status" value="1"/>
</dbReference>
<dbReference type="PRINTS" id="PR00971">
    <property type="entry name" value="RIBOSOMALS10"/>
</dbReference>
<dbReference type="SMART" id="SM01403">
    <property type="entry name" value="Ribosomal_S10"/>
    <property type="match status" value="1"/>
</dbReference>
<dbReference type="SUPFAM" id="SSF54999">
    <property type="entry name" value="Ribosomal protein S10"/>
    <property type="match status" value="1"/>
</dbReference>
<evidence type="ECO:0000250" key="1"/>
<evidence type="ECO:0000255" key="2"/>
<evidence type="ECO:0000305" key="3"/>